<evidence type="ECO:0000255" key="1">
    <source>
        <dbReference type="HAMAP-Rule" id="MF_00746"/>
    </source>
</evidence>
<dbReference type="EMBL" id="CP000026">
    <property type="protein sequence ID" value="AAV78793.1"/>
    <property type="molecule type" value="Genomic_DNA"/>
</dbReference>
<dbReference type="RefSeq" id="WP_000856778.1">
    <property type="nucleotide sequence ID" value="NC_006511.1"/>
</dbReference>
<dbReference type="KEGG" id="spt:SPA2955"/>
<dbReference type="HOGENOM" id="CLU_113336_0_1_6"/>
<dbReference type="Proteomes" id="UP000008185">
    <property type="component" value="Chromosome"/>
</dbReference>
<dbReference type="GO" id="GO:0005737">
    <property type="term" value="C:cytoplasm"/>
    <property type="evidence" value="ECO:0007669"/>
    <property type="project" value="UniProtKB-SubCell"/>
</dbReference>
<dbReference type="GO" id="GO:0008270">
    <property type="term" value="F:zinc ion binding"/>
    <property type="evidence" value="ECO:0007669"/>
    <property type="project" value="UniProtKB-UniRule"/>
</dbReference>
<dbReference type="GO" id="GO:0006950">
    <property type="term" value="P:response to stress"/>
    <property type="evidence" value="ECO:0007669"/>
    <property type="project" value="UniProtKB-ARBA"/>
</dbReference>
<dbReference type="HAMAP" id="MF_00746">
    <property type="entry name" value="SprT"/>
    <property type="match status" value="1"/>
</dbReference>
<dbReference type="InterPro" id="IPR006640">
    <property type="entry name" value="SprT-like_domain"/>
</dbReference>
<dbReference type="InterPro" id="IPR035240">
    <property type="entry name" value="SprT_Zn_ribbon"/>
</dbReference>
<dbReference type="InterPro" id="IPR023483">
    <property type="entry name" value="Uncharacterised_SprT"/>
</dbReference>
<dbReference type="NCBIfam" id="NF003421">
    <property type="entry name" value="PRK04860.1"/>
    <property type="match status" value="1"/>
</dbReference>
<dbReference type="PANTHER" id="PTHR38773">
    <property type="entry name" value="PROTEIN SPRT"/>
    <property type="match status" value="1"/>
</dbReference>
<dbReference type="PANTHER" id="PTHR38773:SF1">
    <property type="entry name" value="PROTEIN SPRT"/>
    <property type="match status" value="1"/>
</dbReference>
<dbReference type="Pfam" id="PF10263">
    <property type="entry name" value="SprT-like"/>
    <property type="match status" value="1"/>
</dbReference>
<dbReference type="Pfam" id="PF17283">
    <property type="entry name" value="Zn_ribbon_SprT"/>
    <property type="match status" value="1"/>
</dbReference>
<dbReference type="SMART" id="SM00731">
    <property type="entry name" value="SprT"/>
    <property type="match status" value="1"/>
</dbReference>
<dbReference type="PROSITE" id="PS00142">
    <property type="entry name" value="ZINC_PROTEASE"/>
    <property type="match status" value="1"/>
</dbReference>
<feature type="chain" id="PRO_1000046539" description="Protein SprT">
    <location>
        <begin position="1"/>
        <end position="165"/>
    </location>
</feature>
<feature type="domain" description="SprT-like" evidence="1">
    <location>
        <begin position="22"/>
        <end position="163"/>
    </location>
</feature>
<feature type="active site" evidence="1">
    <location>
        <position position="79"/>
    </location>
</feature>
<feature type="binding site" evidence="1">
    <location>
        <position position="78"/>
    </location>
    <ligand>
        <name>Zn(2+)</name>
        <dbReference type="ChEBI" id="CHEBI:29105"/>
    </ligand>
</feature>
<feature type="binding site" evidence="1">
    <location>
        <position position="82"/>
    </location>
    <ligand>
        <name>Zn(2+)</name>
        <dbReference type="ChEBI" id="CHEBI:29105"/>
    </ligand>
</feature>
<name>SPRT_SALPA</name>
<protein>
    <recommendedName>
        <fullName evidence="1">Protein SprT</fullName>
    </recommendedName>
</protein>
<gene>
    <name evidence="1" type="primary">sprT</name>
    <name type="ordered locus">SPA2955</name>
</gene>
<reference key="1">
    <citation type="journal article" date="2004" name="Nat. Genet.">
        <title>Comparison of genome degradation in Paratyphi A and Typhi, human-restricted serovars of Salmonella enterica that cause typhoid.</title>
        <authorList>
            <person name="McClelland M."/>
            <person name="Sanderson K.E."/>
            <person name="Clifton S.W."/>
            <person name="Latreille P."/>
            <person name="Porwollik S."/>
            <person name="Sabo A."/>
            <person name="Meyer R."/>
            <person name="Bieri T."/>
            <person name="Ozersky P."/>
            <person name="McLellan M."/>
            <person name="Harkins C.R."/>
            <person name="Wang C."/>
            <person name="Nguyen C."/>
            <person name="Berghoff A."/>
            <person name="Elliott G."/>
            <person name="Kohlberg S."/>
            <person name="Strong C."/>
            <person name="Du F."/>
            <person name="Carter J."/>
            <person name="Kremizki C."/>
            <person name="Layman D."/>
            <person name="Leonard S."/>
            <person name="Sun H."/>
            <person name="Fulton L."/>
            <person name="Nash W."/>
            <person name="Miner T."/>
            <person name="Minx P."/>
            <person name="Delehaunty K."/>
            <person name="Fronick C."/>
            <person name="Magrini V."/>
            <person name="Nhan M."/>
            <person name="Warren W."/>
            <person name="Florea L."/>
            <person name="Spieth J."/>
            <person name="Wilson R.K."/>
        </authorList>
    </citation>
    <scope>NUCLEOTIDE SEQUENCE [LARGE SCALE GENOMIC DNA]</scope>
    <source>
        <strain>ATCC 9150 / SARB42</strain>
    </source>
</reference>
<keyword id="KW-0963">Cytoplasm</keyword>
<keyword id="KW-0479">Metal-binding</keyword>
<keyword id="KW-0862">Zinc</keyword>
<sequence>MKTPRLPIAIQQAVMRRLRENLAQANLKLDRHYPEPKLVYTQRGTSAGTAWLESYEIRLNPVLLLENIDTFIAEVVPHELTHLLVWKHFGRKAPHGKEWKWMMESVLGVPARRTHQFALQSVRRNTFPYHCQCQQHQLTVRRHNRVVRGEAVYRCVHCGEPLVAG</sequence>
<comment type="cofactor">
    <cofactor evidence="1">
        <name>Zn(2+)</name>
        <dbReference type="ChEBI" id="CHEBI:29105"/>
    </cofactor>
    <text evidence="1">Binds 1 zinc ion.</text>
</comment>
<comment type="subcellular location">
    <subcellularLocation>
        <location evidence="1">Cytoplasm</location>
    </subcellularLocation>
</comment>
<comment type="similarity">
    <text evidence="1">Belongs to the SprT family.</text>
</comment>
<proteinExistence type="inferred from homology"/>
<organism>
    <name type="scientific">Salmonella paratyphi A (strain ATCC 9150 / SARB42)</name>
    <dbReference type="NCBI Taxonomy" id="295319"/>
    <lineage>
        <taxon>Bacteria</taxon>
        <taxon>Pseudomonadati</taxon>
        <taxon>Pseudomonadota</taxon>
        <taxon>Gammaproteobacteria</taxon>
        <taxon>Enterobacterales</taxon>
        <taxon>Enterobacteriaceae</taxon>
        <taxon>Salmonella</taxon>
    </lineage>
</organism>
<accession>Q5PJJ0</accession>